<keyword id="KW-0119">Carbohydrate metabolism</keyword>
<keyword id="KW-0320">Glycogen biosynthesis</keyword>
<keyword id="KW-0321">Glycogen metabolism</keyword>
<keyword id="KW-0328">Glycosyltransferase</keyword>
<keyword id="KW-0808">Transferase</keyword>
<sequence>MRAIHCLEERLEQFHTEKCYESYQIFGAHLAVENGVHGVRFTVWAPRAKNLSVVGDFNEWNEKQHRMQKVTEAGIWSLFIPQIEEKEIYKYAIETINGEVILKADPYATYAEVRPNTASVILDIEGYEWNDKNWFRKKKKKSVYKEAMAIYELHFGSWKKKEDGSLYSYREMAEELIPYMANHHFTHIEIMPLVEHPYDRSWGYQGTGYYAVTSRFGTPHDFMYFVDECHKYGIGVILDWVPGHFCKDAHGLYLFDGTPTYEYRDLDVQENRVWGTANFDLGKREVRNFLISNALFWMKYYHIDGFRVDAVANMLYWEKEGKAQSNEYAVSFLRELNEAVFAEDGEFLMTAEDSTAWPLVTAPTYEGGLGFNYKWNMGWMNDVLKYMECAPEYRKYIHEKMTFSLLYAYSENFILPLSHDEVVHGKKSLLNKMPGNYWEKFAQLRLLYGYFFTHPGKKLLFMGGEFGQFDEWKDLEDLDWNLHEFEMHRHMHDYFKELIALYKRSKPLWQLDYSHEGFQWIDADNKEQSIFSFIRKGDREDDVLIVICNFTSIVYEKYKVGVPEFQYYNEILNSDAIAYGGSGRINKKRLKSISQPYHNQTAHVEITIPPFGVSILRPVKMRKGSKKQDGKKAELRSNATSRRKR</sequence>
<protein>
    <recommendedName>
        <fullName evidence="1">1,4-alpha-glucan branching enzyme GlgB</fullName>
        <ecNumber evidence="1">2.4.1.18</ecNumber>
    </recommendedName>
    <alternativeName>
        <fullName evidence="1">1,4-alpha-D-glucan:1,4-alpha-D-glucan 6-glucosyl-transferase</fullName>
    </alternativeName>
    <alternativeName>
        <fullName evidence="1">Alpha-(1-&gt;4)-glucan branching enzyme</fullName>
    </alternativeName>
    <alternativeName>
        <fullName evidence="1">Glycogen branching enzyme</fullName>
        <shortName evidence="1">BE</shortName>
    </alternativeName>
</protein>
<reference key="1">
    <citation type="journal article" date="2008" name="Chem. Biol. Interact.">
        <title>Extending the Bacillus cereus group genomics to putative food-borne pathogens of different toxicity.</title>
        <authorList>
            <person name="Lapidus A."/>
            <person name="Goltsman E."/>
            <person name="Auger S."/>
            <person name="Galleron N."/>
            <person name="Segurens B."/>
            <person name="Dossat C."/>
            <person name="Land M.L."/>
            <person name="Broussolle V."/>
            <person name="Brillard J."/>
            <person name="Guinebretiere M.-H."/>
            <person name="Sanchis V."/>
            <person name="Nguen-the C."/>
            <person name="Lereclus D."/>
            <person name="Richardson P."/>
            <person name="Wincker P."/>
            <person name="Weissenbach J."/>
            <person name="Ehrlich S.D."/>
            <person name="Sorokin A."/>
        </authorList>
    </citation>
    <scope>NUCLEOTIDE SEQUENCE [LARGE SCALE GENOMIC DNA]</scope>
    <source>
        <strain>DSM 22905 / CIP 110041 / 391-98 / NVH 391-98</strain>
    </source>
</reference>
<proteinExistence type="inferred from homology"/>
<accession>A7GUA1</accession>
<comment type="function">
    <text evidence="1">Catalyzes the formation of the alpha-1,6-glucosidic linkages in glycogen by scission of a 1,4-alpha-linked oligosaccharide from growing alpha-1,4-glucan chains and the subsequent attachment of the oligosaccharide to the alpha-1,6 position.</text>
</comment>
<comment type="catalytic activity">
    <reaction evidence="1">
        <text>Transfers a segment of a (1-&gt;4)-alpha-D-glucan chain to a primary hydroxy group in a similar glucan chain.</text>
        <dbReference type="EC" id="2.4.1.18"/>
    </reaction>
</comment>
<comment type="pathway">
    <text evidence="1">Glycan biosynthesis; glycogen biosynthesis.</text>
</comment>
<comment type="subunit">
    <text evidence="1">Monomer.</text>
</comment>
<comment type="similarity">
    <text evidence="1">Belongs to the glycosyl hydrolase 13 family. GlgB subfamily.</text>
</comment>
<dbReference type="EC" id="2.4.1.18" evidence="1"/>
<dbReference type="EMBL" id="CP000764">
    <property type="protein sequence ID" value="ABS23709.1"/>
    <property type="molecule type" value="Genomic_DNA"/>
</dbReference>
<dbReference type="RefSeq" id="WP_012095960.1">
    <property type="nucleotide sequence ID" value="NC_009674.1"/>
</dbReference>
<dbReference type="SMR" id="A7GUA1"/>
<dbReference type="STRING" id="315749.Bcer98_3504"/>
<dbReference type="CAZy" id="CBM48">
    <property type="family name" value="Carbohydrate-Binding Module Family 48"/>
</dbReference>
<dbReference type="CAZy" id="GH13">
    <property type="family name" value="Glycoside Hydrolase Family 13"/>
</dbReference>
<dbReference type="GeneID" id="33898735"/>
<dbReference type="KEGG" id="bcy:Bcer98_3504"/>
<dbReference type="eggNOG" id="COG0296">
    <property type="taxonomic scope" value="Bacteria"/>
</dbReference>
<dbReference type="HOGENOM" id="CLU_004245_4_0_9"/>
<dbReference type="OrthoDB" id="9800174at2"/>
<dbReference type="UniPathway" id="UPA00164"/>
<dbReference type="Proteomes" id="UP000002300">
    <property type="component" value="Chromosome"/>
</dbReference>
<dbReference type="GO" id="GO:0005829">
    <property type="term" value="C:cytosol"/>
    <property type="evidence" value="ECO:0007669"/>
    <property type="project" value="TreeGrafter"/>
</dbReference>
<dbReference type="GO" id="GO:0003844">
    <property type="term" value="F:1,4-alpha-glucan branching enzyme activity"/>
    <property type="evidence" value="ECO:0007669"/>
    <property type="project" value="UniProtKB-UniRule"/>
</dbReference>
<dbReference type="GO" id="GO:0043169">
    <property type="term" value="F:cation binding"/>
    <property type="evidence" value="ECO:0007669"/>
    <property type="project" value="InterPro"/>
</dbReference>
<dbReference type="GO" id="GO:0004553">
    <property type="term" value="F:hydrolase activity, hydrolyzing O-glycosyl compounds"/>
    <property type="evidence" value="ECO:0007669"/>
    <property type="project" value="InterPro"/>
</dbReference>
<dbReference type="GO" id="GO:0005978">
    <property type="term" value="P:glycogen biosynthetic process"/>
    <property type="evidence" value="ECO:0007669"/>
    <property type="project" value="UniProtKB-UniRule"/>
</dbReference>
<dbReference type="CDD" id="cd11322">
    <property type="entry name" value="AmyAc_Glg_BE"/>
    <property type="match status" value="1"/>
</dbReference>
<dbReference type="CDD" id="cd02855">
    <property type="entry name" value="E_set_GBE_prok_N"/>
    <property type="match status" value="1"/>
</dbReference>
<dbReference type="FunFam" id="2.60.40.10:FF:000169">
    <property type="entry name" value="1,4-alpha-glucan branching enzyme GlgB"/>
    <property type="match status" value="1"/>
</dbReference>
<dbReference type="FunFam" id="2.60.40.1180:FF:000002">
    <property type="entry name" value="1,4-alpha-glucan branching enzyme GlgB"/>
    <property type="match status" value="1"/>
</dbReference>
<dbReference type="FunFam" id="3.20.20.80:FF:000003">
    <property type="entry name" value="1,4-alpha-glucan branching enzyme GlgB"/>
    <property type="match status" value="1"/>
</dbReference>
<dbReference type="Gene3D" id="3.20.20.80">
    <property type="entry name" value="Glycosidases"/>
    <property type="match status" value="1"/>
</dbReference>
<dbReference type="Gene3D" id="2.60.40.1180">
    <property type="entry name" value="Golgi alpha-mannosidase II"/>
    <property type="match status" value="1"/>
</dbReference>
<dbReference type="Gene3D" id="2.60.40.10">
    <property type="entry name" value="Immunoglobulins"/>
    <property type="match status" value="1"/>
</dbReference>
<dbReference type="HAMAP" id="MF_00685">
    <property type="entry name" value="GlgB"/>
    <property type="match status" value="1"/>
</dbReference>
<dbReference type="InterPro" id="IPR006048">
    <property type="entry name" value="A-amylase/branching_C"/>
</dbReference>
<dbReference type="InterPro" id="IPR037439">
    <property type="entry name" value="Branching_enzy"/>
</dbReference>
<dbReference type="InterPro" id="IPR006407">
    <property type="entry name" value="GlgB"/>
</dbReference>
<dbReference type="InterPro" id="IPR044143">
    <property type="entry name" value="GlgB_N_E_set_prok"/>
</dbReference>
<dbReference type="InterPro" id="IPR006047">
    <property type="entry name" value="Glyco_hydro_13_cat_dom"/>
</dbReference>
<dbReference type="InterPro" id="IPR004193">
    <property type="entry name" value="Glyco_hydro_13_N"/>
</dbReference>
<dbReference type="InterPro" id="IPR013780">
    <property type="entry name" value="Glyco_hydro_b"/>
</dbReference>
<dbReference type="InterPro" id="IPR017853">
    <property type="entry name" value="Glycoside_hydrolase_SF"/>
</dbReference>
<dbReference type="InterPro" id="IPR013783">
    <property type="entry name" value="Ig-like_fold"/>
</dbReference>
<dbReference type="NCBIfam" id="TIGR01515">
    <property type="entry name" value="branching_enzym"/>
    <property type="match status" value="1"/>
</dbReference>
<dbReference type="NCBIfam" id="NF003811">
    <property type="entry name" value="PRK05402.1"/>
    <property type="match status" value="1"/>
</dbReference>
<dbReference type="NCBIfam" id="NF008967">
    <property type="entry name" value="PRK12313.1"/>
    <property type="match status" value="1"/>
</dbReference>
<dbReference type="PANTHER" id="PTHR43651">
    <property type="entry name" value="1,4-ALPHA-GLUCAN-BRANCHING ENZYME"/>
    <property type="match status" value="1"/>
</dbReference>
<dbReference type="PANTHER" id="PTHR43651:SF3">
    <property type="entry name" value="1,4-ALPHA-GLUCAN-BRANCHING ENZYME"/>
    <property type="match status" value="1"/>
</dbReference>
<dbReference type="Pfam" id="PF00128">
    <property type="entry name" value="Alpha-amylase"/>
    <property type="match status" value="2"/>
</dbReference>
<dbReference type="Pfam" id="PF02806">
    <property type="entry name" value="Alpha-amylase_C"/>
    <property type="match status" value="1"/>
</dbReference>
<dbReference type="Pfam" id="PF02922">
    <property type="entry name" value="CBM_48"/>
    <property type="match status" value="1"/>
</dbReference>
<dbReference type="PIRSF" id="PIRSF000463">
    <property type="entry name" value="GlgB"/>
    <property type="match status" value="1"/>
</dbReference>
<dbReference type="SMART" id="SM00642">
    <property type="entry name" value="Aamy"/>
    <property type="match status" value="1"/>
</dbReference>
<dbReference type="SUPFAM" id="SSF51445">
    <property type="entry name" value="(Trans)glycosidases"/>
    <property type="match status" value="1"/>
</dbReference>
<dbReference type="SUPFAM" id="SSF51011">
    <property type="entry name" value="Glycosyl hydrolase domain"/>
    <property type="match status" value="1"/>
</dbReference>
<organism>
    <name type="scientific">Bacillus cytotoxicus (strain DSM 22905 / CIP 110041 / 391-98 / NVH 391-98)</name>
    <dbReference type="NCBI Taxonomy" id="315749"/>
    <lineage>
        <taxon>Bacteria</taxon>
        <taxon>Bacillati</taxon>
        <taxon>Bacillota</taxon>
        <taxon>Bacilli</taxon>
        <taxon>Bacillales</taxon>
        <taxon>Bacillaceae</taxon>
        <taxon>Bacillus</taxon>
        <taxon>Bacillus cereus group</taxon>
    </lineage>
</organism>
<gene>
    <name evidence="1" type="primary">glgB</name>
    <name type="ordered locus">Bcer98_3504</name>
</gene>
<feature type="chain" id="PRO_1000083065" description="1,4-alpha-glucan branching enzyme GlgB">
    <location>
        <begin position="1"/>
        <end position="645"/>
    </location>
</feature>
<feature type="region of interest" description="Disordered" evidence="2">
    <location>
        <begin position="621"/>
        <end position="645"/>
    </location>
</feature>
<feature type="compositionally biased region" description="Basic and acidic residues" evidence="2">
    <location>
        <begin position="626"/>
        <end position="635"/>
    </location>
</feature>
<feature type="active site" description="Nucleophile" evidence="1">
    <location>
        <position position="309"/>
    </location>
</feature>
<feature type="active site" description="Proton donor" evidence="1">
    <location>
        <position position="352"/>
    </location>
</feature>
<evidence type="ECO:0000255" key="1">
    <source>
        <dbReference type="HAMAP-Rule" id="MF_00685"/>
    </source>
</evidence>
<evidence type="ECO:0000256" key="2">
    <source>
        <dbReference type="SAM" id="MobiDB-lite"/>
    </source>
</evidence>
<name>GLGB_BACCN</name>